<comment type="function">
    <text evidence="1">Produces ATP from ADP in the presence of a proton gradient across the membrane. The V-type alpha chain is a catalytic subunit.</text>
</comment>
<comment type="catalytic activity">
    <reaction evidence="1">
        <text>ATP + H2O + 4 H(+)(in) = ADP + phosphate + 5 H(+)(out)</text>
        <dbReference type="Rhea" id="RHEA:57720"/>
        <dbReference type="ChEBI" id="CHEBI:15377"/>
        <dbReference type="ChEBI" id="CHEBI:15378"/>
        <dbReference type="ChEBI" id="CHEBI:30616"/>
        <dbReference type="ChEBI" id="CHEBI:43474"/>
        <dbReference type="ChEBI" id="CHEBI:456216"/>
        <dbReference type="EC" id="7.1.2.2"/>
    </reaction>
</comment>
<comment type="similarity">
    <text evidence="1">Belongs to the ATPase alpha/beta chains family.</text>
</comment>
<sequence>MVATSGQTTQGYVVEAYGNLLRVRFDGHVRQGEVAYVNVNDTWLKAEVIEVVGQEVKIQVFEDTQDVCRGALVTFSGHLLEAELGPGLLQGIFDGLQNRLQVLAESSFFLKRGEYVNALCKNTLWEYTPKAVVGDVLVRGDALGFVKEGYFNHKIMVPFSCFKEVTITWVISEGSYSVDTVVAKARDAEGKEYSFTMVQKWPIKQAFIQGDKVPCHEIMDVGIRILDTQIPVLKGGTFCTPGPFGAGKTVLQHHLSKYAAVDIVILCACGERAGEVVEVLQEFPHLTDPHTGESLMHRTCIICNTSSMPVAARESSIYLGITVAEYYRQMGLHVLLLADSTSRWAQALREISGRLEEIPGEEAFPAYLASRIAAFYERGGAVRMKDGSEGSLTICGAVSPAGGNFEEPVTQATLSVVGAFCGLSKARADARRYPSIDPMISWSKYLDQVGDILENKIQGWGKAVKKANYFLREGSEIGKRMEVVGEEGIPMEDMEIYLKAELYDFCYLQQNAFDAVDCYCPFDRQIELFSLMSRIFDAKFSFDCPDNARSFFLELQSKIKTLNGQKFLSEEYKEGMEVVLRLLETKMVQTA</sequence>
<reference key="1">
    <citation type="journal article" date="2003" name="Nucleic Acids Res.">
        <title>Genome sequence of Chlamydophila caviae (Chlamydia psittaci GPIC): examining the role of niche-specific genes in the evolution of the Chlamydiaceae.</title>
        <authorList>
            <person name="Read T.D."/>
            <person name="Myers G.S.A."/>
            <person name="Brunham R.C."/>
            <person name="Nelson W.C."/>
            <person name="Paulsen I.T."/>
            <person name="Heidelberg J.F."/>
            <person name="Holtzapple E.K."/>
            <person name="Khouri H.M."/>
            <person name="Federova N.B."/>
            <person name="Carty H.A."/>
            <person name="Umayam L.A."/>
            <person name="Haft D.H."/>
            <person name="Peterson J.D."/>
            <person name="Beanan M.J."/>
            <person name="White O."/>
            <person name="Salzberg S.L."/>
            <person name="Hsia R.-C."/>
            <person name="McClarty G."/>
            <person name="Rank R.G."/>
            <person name="Bavoil P.M."/>
            <person name="Fraser C.M."/>
        </authorList>
    </citation>
    <scope>NUCLEOTIDE SEQUENCE [LARGE SCALE GENOMIC DNA]</scope>
    <source>
        <strain>ATCC VR-813 / DSM 19441 / 03DC25 / GPIC</strain>
    </source>
</reference>
<proteinExistence type="inferred from homology"/>
<protein>
    <recommendedName>
        <fullName evidence="1">V-type ATP synthase alpha chain</fullName>
        <ecNumber evidence="1">7.1.2.2</ecNumber>
    </recommendedName>
    <alternativeName>
        <fullName evidence="1">V-ATPase subunit A</fullName>
    </alternativeName>
</protein>
<accession>Q822J8</accession>
<organism>
    <name type="scientific">Chlamydia caviae (strain ATCC VR-813 / DSM 19441 / 03DC25 / GPIC)</name>
    <name type="common">Chlamydophila caviae</name>
    <dbReference type="NCBI Taxonomy" id="227941"/>
    <lineage>
        <taxon>Bacteria</taxon>
        <taxon>Pseudomonadati</taxon>
        <taxon>Chlamydiota</taxon>
        <taxon>Chlamydiia</taxon>
        <taxon>Chlamydiales</taxon>
        <taxon>Chlamydiaceae</taxon>
        <taxon>Chlamydia/Chlamydophila group</taxon>
        <taxon>Chlamydia</taxon>
    </lineage>
</organism>
<evidence type="ECO:0000255" key="1">
    <source>
        <dbReference type="HAMAP-Rule" id="MF_00309"/>
    </source>
</evidence>
<keyword id="KW-0066">ATP synthesis</keyword>
<keyword id="KW-0067">ATP-binding</keyword>
<keyword id="KW-0375">Hydrogen ion transport</keyword>
<keyword id="KW-0406">Ion transport</keyword>
<keyword id="KW-0547">Nucleotide-binding</keyword>
<keyword id="KW-1278">Translocase</keyword>
<keyword id="KW-0813">Transport</keyword>
<dbReference type="EC" id="7.1.2.2" evidence="1"/>
<dbReference type="EMBL" id="AE015925">
    <property type="protein sequence ID" value="AAP05426.1"/>
    <property type="molecule type" value="Genomic_DNA"/>
</dbReference>
<dbReference type="RefSeq" id="WP_011006641.1">
    <property type="nucleotide sequence ID" value="NC_003361.3"/>
</dbReference>
<dbReference type="SMR" id="Q822J8"/>
<dbReference type="STRING" id="227941.CCA_00684"/>
<dbReference type="KEGG" id="cca:CCA_00684"/>
<dbReference type="eggNOG" id="COG1155">
    <property type="taxonomic scope" value="Bacteria"/>
</dbReference>
<dbReference type="HOGENOM" id="CLU_008162_1_1_0"/>
<dbReference type="OrthoDB" id="9803053at2"/>
<dbReference type="Proteomes" id="UP000002193">
    <property type="component" value="Chromosome"/>
</dbReference>
<dbReference type="GO" id="GO:0005524">
    <property type="term" value="F:ATP binding"/>
    <property type="evidence" value="ECO:0007669"/>
    <property type="project" value="UniProtKB-UniRule"/>
</dbReference>
<dbReference type="GO" id="GO:0046933">
    <property type="term" value="F:proton-transporting ATP synthase activity, rotational mechanism"/>
    <property type="evidence" value="ECO:0007669"/>
    <property type="project" value="UniProtKB-UniRule"/>
</dbReference>
<dbReference type="GO" id="GO:0046961">
    <property type="term" value="F:proton-transporting ATPase activity, rotational mechanism"/>
    <property type="evidence" value="ECO:0007669"/>
    <property type="project" value="InterPro"/>
</dbReference>
<dbReference type="GO" id="GO:0042777">
    <property type="term" value="P:proton motive force-driven plasma membrane ATP synthesis"/>
    <property type="evidence" value="ECO:0007669"/>
    <property type="project" value="UniProtKB-UniRule"/>
</dbReference>
<dbReference type="CDD" id="cd01426">
    <property type="entry name" value="ATP-synt_F1_V1_A1_AB_FliI_N"/>
    <property type="match status" value="1"/>
</dbReference>
<dbReference type="CDD" id="cd18111">
    <property type="entry name" value="ATP-synt_V_A-type_alpha_C"/>
    <property type="match status" value="1"/>
</dbReference>
<dbReference type="CDD" id="cd01134">
    <property type="entry name" value="V_A-ATPase_A"/>
    <property type="match status" value="1"/>
</dbReference>
<dbReference type="FunFam" id="3.40.50.300:FF:000675">
    <property type="entry name" value="V-type ATP synthase alpha chain"/>
    <property type="match status" value="1"/>
</dbReference>
<dbReference type="Gene3D" id="2.30.30.650">
    <property type="match status" value="1"/>
</dbReference>
<dbReference type="Gene3D" id="2.40.50.100">
    <property type="match status" value="1"/>
</dbReference>
<dbReference type="Gene3D" id="1.10.1140.10">
    <property type="entry name" value="Bovine Mitochondrial F1-atpase, Atp Synthase Beta Chain, Chain D, domain 3"/>
    <property type="match status" value="1"/>
</dbReference>
<dbReference type="Gene3D" id="3.40.50.300">
    <property type="entry name" value="P-loop containing nucleotide triphosphate hydrolases"/>
    <property type="match status" value="1"/>
</dbReference>
<dbReference type="HAMAP" id="MF_00309">
    <property type="entry name" value="ATP_synth_A_arch"/>
    <property type="match status" value="1"/>
</dbReference>
<dbReference type="InterPro" id="IPR055190">
    <property type="entry name" value="ATP-synt_VA_C"/>
</dbReference>
<dbReference type="InterPro" id="IPR031686">
    <property type="entry name" value="ATP-synth_a_Xtn"/>
</dbReference>
<dbReference type="InterPro" id="IPR020003">
    <property type="entry name" value="ATPase_a/bsu_AS"/>
</dbReference>
<dbReference type="InterPro" id="IPR004100">
    <property type="entry name" value="ATPase_F1/V1/A1_a/bsu_N"/>
</dbReference>
<dbReference type="InterPro" id="IPR000194">
    <property type="entry name" value="ATPase_F1/V1/A1_a/bsu_nucl-bd"/>
</dbReference>
<dbReference type="InterPro" id="IPR024034">
    <property type="entry name" value="ATPase_F1/V1_b/a_C"/>
</dbReference>
<dbReference type="InterPro" id="IPR027417">
    <property type="entry name" value="P-loop_NTPase"/>
</dbReference>
<dbReference type="InterPro" id="IPR022878">
    <property type="entry name" value="V-ATPase_asu"/>
</dbReference>
<dbReference type="NCBIfam" id="NF003220">
    <property type="entry name" value="PRK04192.1"/>
    <property type="match status" value="1"/>
</dbReference>
<dbReference type="PANTHER" id="PTHR43607:SF1">
    <property type="entry name" value="H(+)-TRANSPORTING TWO-SECTOR ATPASE"/>
    <property type="match status" value="1"/>
</dbReference>
<dbReference type="PANTHER" id="PTHR43607">
    <property type="entry name" value="V-TYPE PROTON ATPASE CATALYTIC SUBUNIT A"/>
    <property type="match status" value="1"/>
</dbReference>
<dbReference type="Pfam" id="PF00006">
    <property type="entry name" value="ATP-synt_ab"/>
    <property type="match status" value="1"/>
</dbReference>
<dbReference type="Pfam" id="PF02874">
    <property type="entry name" value="ATP-synt_ab_N"/>
    <property type="match status" value="1"/>
</dbReference>
<dbReference type="Pfam" id="PF16886">
    <property type="entry name" value="ATP-synt_ab_Xtn"/>
    <property type="match status" value="1"/>
</dbReference>
<dbReference type="Pfam" id="PF22919">
    <property type="entry name" value="ATP-synt_VA_C"/>
    <property type="match status" value="1"/>
</dbReference>
<dbReference type="SUPFAM" id="SSF52540">
    <property type="entry name" value="P-loop containing nucleoside triphosphate hydrolases"/>
    <property type="match status" value="1"/>
</dbReference>
<dbReference type="PROSITE" id="PS00152">
    <property type="entry name" value="ATPASE_ALPHA_BETA"/>
    <property type="match status" value="1"/>
</dbReference>
<name>VATA_CHLCV</name>
<feature type="chain" id="PRO_0000144610" description="V-type ATP synthase alpha chain">
    <location>
        <begin position="1"/>
        <end position="591"/>
    </location>
</feature>
<feature type="binding site" evidence="1">
    <location>
        <begin position="242"/>
        <end position="249"/>
    </location>
    <ligand>
        <name>ATP</name>
        <dbReference type="ChEBI" id="CHEBI:30616"/>
    </ligand>
</feature>
<gene>
    <name evidence="1" type="primary">atpA</name>
    <name type="ordered locus">CCA_00684</name>
</gene>